<keyword id="KW-0067">ATP-binding</keyword>
<keyword id="KW-0173">Coenzyme A biosynthesis</keyword>
<keyword id="KW-0963">Cytoplasm</keyword>
<keyword id="KW-0418">Kinase</keyword>
<keyword id="KW-0479">Metal-binding</keyword>
<keyword id="KW-0547">Nucleotide-binding</keyword>
<keyword id="KW-0630">Potassium</keyword>
<keyword id="KW-0808">Transferase</keyword>
<reference key="1">
    <citation type="submission" date="2005-09" db="EMBL/GenBank/DDBJ databases">
        <title>Complete genome sequence of Clostridium kluyveri and comparative genomics of Clostridia species.</title>
        <authorList>
            <person name="Inui M."/>
            <person name="Nonaka H."/>
            <person name="Shinoda Y."/>
            <person name="Ikenaga Y."/>
            <person name="Abe M."/>
            <person name="Naito K."/>
            <person name="Vertes A.A."/>
            <person name="Yukawa H."/>
        </authorList>
    </citation>
    <scope>NUCLEOTIDE SEQUENCE [LARGE SCALE GENOMIC DNA]</scope>
    <source>
        <strain>NBRC 12016</strain>
    </source>
</reference>
<sequence length="259" mass="28324">MILVLDVGNTNIVLGVYDDRELISVWRLSTDSKRTADEYGVQVIDLFLQSKLKPEDITGSIISSVVPTIMYSLEHMIIKYFQVSPIIVGPGVKTGINVKYDNPREVGADRIVNAVAAHEIYNRSLIIIDFGTATTFCAVTSAGDYLGGAICPGIKISSSALFEMAAKLPRVEIIRPQNIIGKNTVSSMQSGIVYGYIGQVDYIVKKMKMEMMDLGEEEPLVIATGGLAKLINEGTKSIDIIDSVLTLTGLRLIYEKNKE</sequence>
<accession>B9DY69</accession>
<evidence type="ECO:0000255" key="1">
    <source>
        <dbReference type="HAMAP-Rule" id="MF_01274"/>
    </source>
</evidence>
<feature type="chain" id="PRO_1000165193" description="Type III pantothenate kinase">
    <location>
        <begin position="1"/>
        <end position="259"/>
    </location>
</feature>
<feature type="active site" description="Proton acceptor" evidence="1">
    <location>
        <position position="109"/>
    </location>
</feature>
<feature type="binding site" evidence="1">
    <location>
        <begin position="6"/>
        <end position="13"/>
    </location>
    <ligand>
        <name>ATP</name>
        <dbReference type="ChEBI" id="CHEBI:30616"/>
    </ligand>
</feature>
<feature type="binding site" evidence="1">
    <location>
        <position position="100"/>
    </location>
    <ligand>
        <name>substrate</name>
    </ligand>
</feature>
<feature type="binding site" evidence="1">
    <location>
        <begin position="107"/>
        <end position="110"/>
    </location>
    <ligand>
        <name>substrate</name>
    </ligand>
</feature>
<feature type="binding site" evidence="1">
    <location>
        <position position="129"/>
    </location>
    <ligand>
        <name>K(+)</name>
        <dbReference type="ChEBI" id="CHEBI:29103"/>
    </ligand>
</feature>
<feature type="binding site" evidence="1">
    <location>
        <position position="132"/>
    </location>
    <ligand>
        <name>ATP</name>
        <dbReference type="ChEBI" id="CHEBI:30616"/>
    </ligand>
</feature>
<feature type="binding site" evidence="1">
    <location>
        <position position="184"/>
    </location>
    <ligand>
        <name>substrate</name>
    </ligand>
</feature>
<proteinExistence type="inferred from homology"/>
<gene>
    <name evidence="1" type="primary">coaX</name>
    <name type="ordered locus">CKR_0143</name>
</gene>
<comment type="function">
    <text evidence="1">Catalyzes the phosphorylation of pantothenate (Pan), the first step in CoA biosynthesis.</text>
</comment>
<comment type="catalytic activity">
    <reaction evidence="1">
        <text>(R)-pantothenate + ATP = (R)-4'-phosphopantothenate + ADP + H(+)</text>
        <dbReference type="Rhea" id="RHEA:16373"/>
        <dbReference type="ChEBI" id="CHEBI:10986"/>
        <dbReference type="ChEBI" id="CHEBI:15378"/>
        <dbReference type="ChEBI" id="CHEBI:29032"/>
        <dbReference type="ChEBI" id="CHEBI:30616"/>
        <dbReference type="ChEBI" id="CHEBI:456216"/>
        <dbReference type="EC" id="2.7.1.33"/>
    </reaction>
</comment>
<comment type="cofactor">
    <cofactor evidence="1">
        <name>NH4(+)</name>
        <dbReference type="ChEBI" id="CHEBI:28938"/>
    </cofactor>
    <cofactor evidence="1">
        <name>K(+)</name>
        <dbReference type="ChEBI" id="CHEBI:29103"/>
    </cofactor>
    <text evidence="1">A monovalent cation. Ammonium or potassium.</text>
</comment>
<comment type="pathway">
    <text evidence="1">Cofactor biosynthesis; coenzyme A biosynthesis; CoA from (R)-pantothenate: step 1/5.</text>
</comment>
<comment type="subunit">
    <text evidence="1">Homodimer.</text>
</comment>
<comment type="subcellular location">
    <subcellularLocation>
        <location evidence="1">Cytoplasm</location>
    </subcellularLocation>
</comment>
<comment type="similarity">
    <text evidence="1">Belongs to the type III pantothenate kinase family.</text>
</comment>
<organism>
    <name type="scientific">Clostridium kluyveri (strain NBRC 12016)</name>
    <dbReference type="NCBI Taxonomy" id="583346"/>
    <lineage>
        <taxon>Bacteria</taxon>
        <taxon>Bacillati</taxon>
        <taxon>Bacillota</taxon>
        <taxon>Clostridia</taxon>
        <taxon>Eubacteriales</taxon>
        <taxon>Clostridiaceae</taxon>
        <taxon>Clostridium</taxon>
    </lineage>
</organism>
<name>COAX_CLOK1</name>
<protein>
    <recommendedName>
        <fullName evidence="1">Type III pantothenate kinase</fullName>
        <ecNumber evidence="1">2.7.1.33</ecNumber>
    </recommendedName>
    <alternativeName>
        <fullName evidence="1">PanK-III</fullName>
    </alternativeName>
    <alternativeName>
        <fullName evidence="1">Pantothenic acid kinase</fullName>
    </alternativeName>
</protein>
<dbReference type="EC" id="2.7.1.33" evidence="1"/>
<dbReference type="EMBL" id="AP009049">
    <property type="protein sequence ID" value="BAH05194.1"/>
    <property type="molecule type" value="Genomic_DNA"/>
</dbReference>
<dbReference type="RefSeq" id="WP_011988764.1">
    <property type="nucleotide sequence ID" value="NC_011837.1"/>
</dbReference>
<dbReference type="SMR" id="B9DY69"/>
<dbReference type="KEGG" id="ckr:CKR_0143"/>
<dbReference type="HOGENOM" id="CLU_066627_1_0_9"/>
<dbReference type="UniPathway" id="UPA00241">
    <property type="reaction ID" value="UER00352"/>
</dbReference>
<dbReference type="Proteomes" id="UP000007969">
    <property type="component" value="Chromosome"/>
</dbReference>
<dbReference type="GO" id="GO:0005737">
    <property type="term" value="C:cytoplasm"/>
    <property type="evidence" value="ECO:0007669"/>
    <property type="project" value="UniProtKB-SubCell"/>
</dbReference>
<dbReference type="GO" id="GO:0005524">
    <property type="term" value="F:ATP binding"/>
    <property type="evidence" value="ECO:0007669"/>
    <property type="project" value="UniProtKB-UniRule"/>
</dbReference>
<dbReference type="GO" id="GO:0046872">
    <property type="term" value="F:metal ion binding"/>
    <property type="evidence" value="ECO:0007669"/>
    <property type="project" value="UniProtKB-KW"/>
</dbReference>
<dbReference type="GO" id="GO:0004594">
    <property type="term" value="F:pantothenate kinase activity"/>
    <property type="evidence" value="ECO:0007669"/>
    <property type="project" value="UniProtKB-UniRule"/>
</dbReference>
<dbReference type="GO" id="GO:0015937">
    <property type="term" value="P:coenzyme A biosynthetic process"/>
    <property type="evidence" value="ECO:0007669"/>
    <property type="project" value="UniProtKB-UniRule"/>
</dbReference>
<dbReference type="CDD" id="cd24015">
    <property type="entry name" value="ASKHA_NBD_PanK-III"/>
    <property type="match status" value="1"/>
</dbReference>
<dbReference type="Gene3D" id="3.30.420.40">
    <property type="match status" value="2"/>
</dbReference>
<dbReference type="HAMAP" id="MF_01274">
    <property type="entry name" value="Pantothen_kinase_3"/>
    <property type="match status" value="1"/>
</dbReference>
<dbReference type="InterPro" id="IPR043129">
    <property type="entry name" value="ATPase_NBD"/>
</dbReference>
<dbReference type="InterPro" id="IPR004619">
    <property type="entry name" value="Type_III_PanK"/>
</dbReference>
<dbReference type="NCBIfam" id="TIGR00671">
    <property type="entry name" value="baf"/>
    <property type="match status" value="1"/>
</dbReference>
<dbReference type="NCBIfam" id="NF009847">
    <property type="entry name" value="PRK13318.1-5"/>
    <property type="match status" value="1"/>
</dbReference>
<dbReference type="NCBIfam" id="NF009848">
    <property type="entry name" value="PRK13318.1-6"/>
    <property type="match status" value="1"/>
</dbReference>
<dbReference type="NCBIfam" id="NF009855">
    <property type="entry name" value="PRK13321.1"/>
    <property type="match status" value="1"/>
</dbReference>
<dbReference type="PANTHER" id="PTHR34265">
    <property type="entry name" value="TYPE III PANTOTHENATE KINASE"/>
    <property type="match status" value="1"/>
</dbReference>
<dbReference type="PANTHER" id="PTHR34265:SF1">
    <property type="entry name" value="TYPE III PANTOTHENATE KINASE"/>
    <property type="match status" value="1"/>
</dbReference>
<dbReference type="Pfam" id="PF03309">
    <property type="entry name" value="Pan_kinase"/>
    <property type="match status" value="1"/>
</dbReference>
<dbReference type="SUPFAM" id="SSF53067">
    <property type="entry name" value="Actin-like ATPase domain"/>
    <property type="match status" value="2"/>
</dbReference>